<dbReference type="EMBL" id="AL445066">
    <property type="protein sequence ID" value="CAC12165.1"/>
    <property type="status" value="ALT_INIT"/>
    <property type="molecule type" value="Genomic_DNA"/>
</dbReference>
<dbReference type="RefSeq" id="WP_048162368.1">
    <property type="nucleotide sequence ID" value="NC_002578.1"/>
</dbReference>
<dbReference type="SMR" id="Q9HJD3"/>
<dbReference type="STRING" id="273075.gene:9572257"/>
<dbReference type="PaxDb" id="273075-Ta1036"/>
<dbReference type="EnsemblBacteria" id="CAC12165">
    <property type="protein sequence ID" value="CAC12165"/>
    <property type="gene ID" value="CAC12165"/>
</dbReference>
<dbReference type="KEGG" id="tac:Ta1036"/>
<dbReference type="eggNOG" id="arCOG00417">
    <property type="taxonomic scope" value="Archaea"/>
</dbReference>
<dbReference type="HOGENOM" id="CLU_041732_2_0_2"/>
<dbReference type="InParanoid" id="Q9HJD3"/>
<dbReference type="OrthoDB" id="17644at2157"/>
<dbReference type="Proteomes" id="UP000001024">
    <property type="component" value="Chromosome"/>
</dbReference>
<dbReference type="GO" id="GO:0005524">
    <property type="term" value="F:ATP binding"/>
    <property type="evidence" value="ECO:0007669"/>
    <property type="project" value="UniProtKB-UniRule"/>
</dbReference>
<dbReference type="GO" id="GO:0140664">
    <property type="term" value="F:ATP-dependent DNA damage sensor activity"/>
    <property type="evidence" value="ECO:0007669"/>
    <property type="project" value="InterPro"/>
</dbReference>
<dbReference type="GO" id="GO:0003684">
    <property type="term" value="F:damaged DNA binding"/>
    <property type="evidence" value="ECO:0007669"/>
    <property type="project" value="UniProtKB-UniRule"/>
</dbReference>
<dbReference type="GO" id="GO:0006310">
    <property type="term" value="P:DNA recombination"/>
    <property type="evidence" value="ECO:0007669"/>
    <property type="project" value="UniProtKB-UniRule"/>
</dbReference>
<dbReference type="GO" id="GO:0006281">
    <property type="term" value="P:DNA repair"/>
    <property type="evidence" value="ECO:0007669"/>
    <property type="project" value="UniProtKB-UniRule"/>
</dbReference>
<dbReference type="CDD" id="cd01394">
    <property type="entry name" value="archRadB"/>
    <property type="match status" value="1"/>
</dbReference>
<dbReference type="Gene3D" id="3.40.50.300">
    <property type="entry name" value="P-loop containing nucleotide triphosphate hydrolases"/>
    <property type="match status" value="1"/>
</dbReference>
<dbReference type="HAMAP" id="MF_00350">
    <property type="entry name" value="RadB"/>
    <property type="match status" value="1"/>
</dbReference>
<dbReference type="InterPro" id="IPR013632">
    <property type="entry name" value="DNA_recomb/repair_Rad51_C"/>
</dbReference>
<dbReference type="InterPro" id="IPR011939">
    <property type="entry name" value="DNA_repair_and_recomb_RadB"/>
</dbReference>
<dbReference type="InterPro" id="IPR027417">
    <property type="entry name" value="P-loop_NTPase"/>
</dbReference>
<dbReference type="InterPro" id="IPR020588">
    <property type="entry name" value="RecA_ATP-bd"/>
</dbReference>
<dbReference type="NCBIfam" id="TIGR02237">
    <property type="entry name" value="recomb_radB"/>
    <property type="match status" value="1"/>
</dbReference>
<dbReference type="PANTHER" id="PTHR22942:SF47">
    <property type="entry name" value="DNA REPAIR AND RECOMBINATION PROTEIN RADB"/>
    <property type="match status" value="1"/>
</dbReference>
<dbReference type="PANTHER" id="PTHR22942">
    <property type="entry name" value="RECA/RAD51/RADA DNA STRAND-PAIRING FAMILY MEMBER"/>
    <property type="match status" value="1"/>
</dbReference>
<dbReference type="Pfam" id="PF08423">
    <property type="entry name" value="Rad51"/>
    <property type="match status" value="1"/>
</dbReference>
<dbReference type="PIRSF" id="PIRSF003336">
    <property type="entry name" value="RadB"/>
    <property type="match status" value="1"/>
</dbReference>
<dbReference type="SUPFAM" id="SSF52540">
    <property type="entry name" value="P-loop containing nucleoside triphosphate hydrolases"/>
    <property type="match status" value="1"/>
</dbReference>
<dbReference type="PROSITE" id="PS50162">
    <property type="entry name" value="RECA_2"/>
    <property type="match status" value="1"/>
</dbReference>
<sequence length="229" mass="25309">MDEISLQQGVRRIQTGVGCIDALLNGGLEGGIITEIFGEGGSGKTNICMIASCSAMSQGLKVIYIDSEGLSPERFLAVCRSDISMFKLFRVYSLDDQEVAIMKASKMADRDQKIGMIVLDSFSEFFRLEKSDDRQARIAEFQRQLSLLSSVAAKKNIPVLITNQIYQDIDNGTLLPFGGFLVDHAMKAILRIEKMPDGRRRITVTKHRSVREGVSAMFRITDDGVSCEG</sequence>
<evidence type="ECO:0000250" key="1"/>
<evidence type="ECO:0000255" key="2"/>
<evidence type="ECO:0000305" key="3"/>
<keyword id="KW-0067">ATP-binding</keyword>
<keyword id="KW-0227">DNA damage</keyword>
<keyword id="KW-0233">DNA recombination</keyword>
<keyword id="KW-0238">DNA-binding</keyword>
<keyword id="KW-0547">Nucleotide-binding</keyword>
<keyword id="KW-1185">Reference proteome</keyword>
<organism>
    <name type="scientific">Thermoplasma acidophilum (strain ATCC 25905 / DSM 1728 / JCM 9062 / NBRC 15155 / AMRC-C165)</name>
    <dbReference type="NCBI Taxonomy" id="273075"/>
    <lineage>
        <taxon>Archaea</taxon>
        <taxon>Methanobacteriati</taxon>
        <taxon>Thermoplasmatota</taxon>
        <taxon>Thermoplasmata</taxon>
        <taxon>Thermoplasmatales</taxon>
        <taxon>Thermoplasmataceae</taxon>
        <taxon>Thermoplasma</taxon>
    </lineage>
</organism>
<accession>Q9HJD3</accession>
<protein>
    <recommendedName>
        <fullName>DNA repair and recombination protein RadB</fullName>
    </recommendedName>
</protein>
<gene>
    <name type="primary">radB</name>
    <name type="ordered locus">Ta1036</name>
</gene>
<comment type="function">
    <text evidence="1">Involved in DNA repair and in homologous recombination. May regulate the cleavage reactions of the branch-structured DNA. Has a very weak ATPase activity that is not stimulated by DNA. Binds DNA but does not promote DNA strands exchange (By similarity).</text>
</comment>
<comment type="similarity">
    <text evidence="3">Belongs to the eukaryotic RecA-like protein family. RadB subfamily.</text>
</comment>
<comment type="sequence caution" evidence="3">
    <conflict type="erroneous initiation">
        <sequence resource="EMBL-CDS" id="CAC12165"/>
    </conflict>
</comment>
<reference key="1">
    <citation type="journal article" date="2000" name="Nature">
        <title>The genome sequence of the thermoacidophilic scavenger Thermoplasma acidophilum.</title>
        <authorList>
            <person name="Ruepp A."/>
            <person name="Graml W."/>
            <person name="Santos-Martinez M.-L."/>
            <person name="Koretke K.K."/>
            <person name="Volker C."/>
            <person name="Mewes H.-W."/>
            <person name="Frishman D."/>
            <person name="Stocker S."/>
            <person name="Lupas A.N."/>
            <person name="Baumeister W."/>
        </authorList>
    </citation>
    <scope>NUCLEOTIDE SEQUENCE [LARGE SCALE GENOMIC DNA]</scope>
    <source>
        <strain>ATCC 25905 / DSM 1728 / JCM 9062 / NBRC 15155 / AMRC-C165</strain>
    </source>
</reference>
<name>RADB_THEAC</name>
<feature type="chain" id="PRO_0000150120" description="DNA repair and recombination protein RadB">
    <location>
        <begin position="1"/>
        <end position="229"/>
    </location>
</feature>
<feature type="binding site" evidence="2">
    <location>
        <begin position="38"/>
        <end position="45"/>
    </location>
    <ligand>
        <name>ATP</name>
        <dbReference type="ChEBI" id="CHEBI:30616"/>
    </ligand>
</feature>
<proteinExistence type="inferred from homology"/>